<name>TP_NEOBT</name>
<protein>
    <recommendedName>
        <fullName evidence="4">Aspyridones efflux protein</fullName>
    </recommendedName>
</protein>
<evidence type="ECO:0000255" key="1"/>
<evidence type="ECO:0000255" key="2">
    <source>
        <dbReference type="PROSITE-ProRule" id="PRU00498"/>
    </source>
</evidence>
<evidence type="ECO:0000256" key="3">
    <source>
        <dbReference type="SAM" id="MobiDB-lite"/>
    </source>
</evidence>
<evidence type="ECO:0000303" key="4">
    <source>
    </source>
</evidence>
<evidence type="ECO:0000305" key="5"/>
<evidence type="ECO:0000305" key="6">
    <source>
    </source>
</evidence>
<comment type="function">
    <text evidence="6">Efflux pump that may be involved in the secretion of leporins (PubMed:14745177).</text>
</comment>
<comment type="subcellular location">
    <subcellularLocation>
        <location evidence="5">Cell membrane</location>
        <topology evidence="1">Multi-pass membrane protein</topology>
    </subcellularLocation>
</comment>
<comment type="similarity">
    <text evidence="5">Belongs to the major facilitator superfamily. TCR/Tet family.</text>
</comment>
<feature type="chain" id="PRO_0000438564" description="Aspyridones efflux protein">
    <location>
        <begin position="1"/>
        <end position="564"/>
    </location>
</feature>
<feature type="transmembrane region" description="Helical" evidence="1">
    <location>
        <begin position="66"/>
        <end position="86"/>
    </location>
</feature>
<feature type="transmembrane region" description="Helical" evidence="1">
    <location>
        <begin position="127"/>
        <end position="147"/>
    </location>
</feature>
<feature type="transmembrane region" description="Helical" evidence="1">
    <location>
        <begin position="158"/>
        <end position="178"/>
    </location>
</feature>
<feature type="transmembrane region" description="Helical" evidence="1">
    <location>
        <begin position="185"/>
        <end position="205"/>
    </location>
</feature>
<feature type="transmembrane region" description="Helical" evidence="1">
    <location>
        <begin position="216"/>
        <end position="236"/>
    </location>
</feature>
<feature type="transmembrane region" description="Helical" evidence="1">
    <location>
        <begin position="260"/>
        <end position="280"/>
    </location>
</feature>
<feature type="transmembrane region" description="Helical" evidence="1">
    <location>
        <begin position="287"/>
        <end position="307"/>
    </location>
</feature>
<feature type="transmembrane region" description="Helical" evidence="1">
    <location>
        <begin position="335"/>
        <end position="355"/>
    </location>
</feature>
<feature type="transmembrane region" description="Helical" evidence="1">
    <location>
        <begin position="368"/>
        <end position="388"/>
    </location>
</feature>
<feature type="transmembrane region" description="Helical" evidence="1">
    <location>
        <begin position="392"/>
        <end position="412"/>
    </location>
</feature>
<feature type="transmembrane region" description="Helical" evidence="1">
    <location>
        <begin position="416"/>
        <end position="436"/>
    </location>
</feature>
<feature type="transmembrane region" description="Helical" evidence="1">
    <location>
        <begin position="454"/>
        <end position="474"/>
    </location>
</feature>
<feature type="transmembrane region" description="Helical" evidence="1">
    <location>
        <begin position="528"/>
        <end position="548"/>
    </location>
</feature>
<feature type="region of interest" description="Disordered" evidence="3">
    <location>
        <begin position="1"/>
        <end position="49"/>
    </location>
</feature>
<feature type="compositionally biased region" description="Low complexity" evidence="3">
    <location>
        <begin position="1"/>
        <end position="17"/>
    </location>
</feature>
<feature type="compositionally biased region" description="Basic and acidic residues" evidence="3">
    <location>
        <begin position="19"/>
        <end position="47"/>
    </location>
</feature>
<feature type="glycosylation site" description="N-linked (GlcNAc...) asparagine" evidence="2">
    <location>
        <position position="415"/>
    </location>
</feature>
<feature type="glycosylation site" description="N-linked (GlcNAc...) asparagine" evidence="2">
    <location>
        <position position="524"/>
    </location>
</feature>
<accession>Q6F5E3</accession>
<gene>
    <name type="primary">TP</name>
</gene>
<keyword id="KW-1003">Cell membrane</keyword>
<keyword id="KW-0325">Glycoprotein</keyword>
<keyword id="KW-0472">Membrane</keyword>
<keyword id="KW-0812">Transmembrane</keyword>
<keyword id="KW-1133">Transmembrane helix</keyword>
<keyword id="KW-0813">Transport</keyword>
<proteinExistence type="inferred from homology"/>
<reference key="1">
    <citation type="journal article" date="2004" name="Biosci. Biotechnol. Biochem.">
        <title>Cloning of a gene cluster responsible for the biosynthesis of diterpene aphidicolin, a specific inhibitor of DNA polymerase alpha.</title>
        <authorList>
            <person name="Toyomasu T."/>
            <person name="Nakaminami K."/>
            <person name="Toshima H."/>
            <person name="Mie T."/>
            <person name="Watanabe K."/>
            <person name="Ito H."/>
            <person name="Matsui H."/>
            <person name="Mitsuhashi W."/>
            <person name="Sassa T."/>
            <person name="Oikawa H."/>
        </authorList>
    </citation>
    <scope>NUCLEOTIDE SEQUENCE [GENOMIC DNA]</scope>
    <scope>IDENTIFICATION OF GENE CLUSTER</scope>
    <source>
        <strain>PS-16</strain>
    </source>
</reference>
<sequence>MHPDQADTAAMQQQTTTECSDRSRPEKAEEGHAREHTVTRTCSREPEQTATATKPTGLKLICLTTAICLTIFLISVDFSILATAIPAITAEFKSVADIGWYGSSYLLTTASSQLLLGKCYTVFDLKWTFLLALLTFEVGSIICATAPSSVVLIIGRAIAGCGNAGLLSGALLILTHSVPLEKRPLFMAMTGGTYGVAAIAGPPLGGVFTDKLSWRWCFWINLPIGALTFLVIVFLFKSPPRSGFDGSRSWLAKVMRFDPVGTLMFMPAIICVLLALQWGGTTHAWNSGIVVALLVVGGVLVIAFGIVQWLMHDDATIPLRIIKKRTIWACAAYQFALGAAFFVFIYFLPIWFQGVQGASAIQSGVRTLPMLVGNIVATAVSGVLVTIIGYYAPFMILGTILASVGAGLLLLFTPNVTAASWIGYQAIVGLGIGFGWQQPFVAVQTVLDIKDVPIATATLSFAQTLGGTLFVSVAQTAFSTKLTQELVSQVPQLDPASILHEGGAAELDKLVPEQYLPDVVLSYNNSLLSAFFVATIMAIMSLVGCTFVEWNSVKGKKADAVPAA</sequence>
<organism>
    <name type="scientific">Neocamarosporium betae</name>
    <name type="common">Beet black rot fungus</name>
    <name type="synonym">Pleospora betae</name>
    <dbReference type="NCBI Taxonomy" id="1979465"/>
    <lineage>
        <taxon>Eukaryota</taxon>
        <taxon>Fungi</taxon>
        <taxon>Dikarya</taxon>
        <taxon>Ascomycota</taxon>
        <taxon>Pezizomycotina</taxon>
        <taxon>Dothideomycetes</taxon>
        <taxon>Pleosporomycetidae</taxon>
        <taxon>Pleosporales</taxon>
        <taxon>Pleosporineae</taxon>
        <taxon>Pleosporaceae</taxon>
        <taxon>Neocamarosporium</taxon>
    </lineage>
</organism>
<dbReference type="EMBL" id="AB114137">
    <property type="protein sequence ID" value="BAD29973.1"/>
    <property type="molecule type" value="Genomic_DNA"/>
</dbReference>
<dbReference type="SMR" id="Q6F5E3"/>
<dbReference type="GlyCosmos" id="Q6F5E3">
    <property type="glycosylation" value="2 sites, No reported glycans"/>
</dbReference>
<dbReference type="GO" id="GO:0005886">
    <property type="term" value="C:plasma membrane"/>
    <property type="evidence" value="ECO:0007669"/>
    <property type="project" value="UniProtKB-SubCell"/>
</dbReference>
<dbReference type="GO" id="GO:0022857">
    <property type="term" value="F:transmembrane transporter activity"/>
    <property type="evidence" value="ECO:0007669"/>
    <property type="project" value="InterPro"/>
</dbReference>
<dbReference type="CDD" id="cd17502">
    <property type="entry name" value="MFS_Azr1_MDR_like"/>
    <property type="match status" value="1"/>
</dbReference>
<dbReference type="FunFam" id="1.20.1250.20:FF:000196">
    <property type="entry name" value="MFS toxin efflux pump (AflT)"/>
    <property type="match status" value="1"/>
</dbReference>
<dbReference type="FunFam" id="1.20.1720.10:FF:000012">
    <property type="entry name" value="MFS toxin efflux pump (AflT)"/>
    <property type="match status" value="1"/>
</dbReference>
<dbReference type="Gene3D" id="1.20.1250.20">
    <property type="entry name" value="MFS general substrate transporter like domains"/>
    <property type="match status" value="2"/>
</dbReference>
<dbReference type="InterPro" id="IPR011701">
    <property type="entry name" value="MFS"/>
</dbReference>
<dbReference type="InterPro" id="IPR020846">
    <property type="entry name" value="MFS_dom"/>
</dbReference>
<dbReference type="InterPro" id="IPR036259">
    <property type="entry name" value="MFS_trans_sf"/>
</dbReference>
<dbReference type="PANTHER" id="PTHR23501">
    <property type="entry name" value="MAJOR FACILITATOR SUPERFAMILY"/>
    <property type="match status" value="1"/>
</dbReference>
<dbReference type="PANTHER" id="PTHR23501:SF199">
    <property type="entry name" value="MFS EFFLUX TRANSPORTER INPD-RELATED"/>
    <property type="match status" value="1"/>
</dbReference>
<dbReference type="Pfam" id="PF07690">
    <property type="entry name" value="MFS_1"/>
    <property type="match status" value="1"/>
</dbReference>
<dbReference type="SUPFAM" id="SSF103473">
    <property type="entry name" value="MFS general substrate transporter"/>
    <property type="match status" value="1"/>
</dbReference>
<dbReference type="PROSITE" id="PS50850">
    <property type="entry name" value="MFS"/>
    <property type="match status" value="1"/>
</dbReference>